<gene>
    <name evidence="1" type="primary">tatA</name>
    <name type="ordered locus">LA_1926</name>
</gene>
<feature type="chain" id="PRO_0000097943" description="Sec-independent protein translocase protein TatA">
    <location>
        <begin position="1"/>
        <end position="85"/>
    </location>
</feature>
<feature type="transmembrane region" description="Helical" evidence="1">
    <location>
        <begin position="7"/>
        <end position="27"/>
    </location>
</feature>
<feature type="region of interest" description="Disordered" evidence="2">
    <location>
        <begin position="50"/>
        <end position="85"/>
    </location>
</feature>
<feature type="compositionally biased region" description="Basic and acidic residues" evidence="2">
    <location>
        <begin position="64"/>
        <end position="76"/>
    </location>
</feature>
<sequence length="85" mass="9302">MFAPLAVFGSLGWTEILLILFIALLLFGGKRLPSLAKDLGDGIRSFRKSLTGESDDSSQQISQEQERSVPKEETKTSKSKKSKSA</sequence>
<name>TATA_LEPIN</name>
<comment type="function">
    <text evidence="1">Part of the twin-arginine translocation (Tat) system that transports large folded proteins containing a characteristic twin-arginine motif in their signal peptide across membranes. TatA could form the protein-conducting channel of the Tat system.</text>
</comment>
<comment type="subunit">
    <text evidence="1">Forms a complex with TatC.</text>
</comment>
<comment type="subcellular location">
    <subcellularLocation>
        <location evidence="1">Cell inner membrane</location>
        <topology evidence="1">Single-pass membrane protein</topology>
    </subcellularLocation>
</comment>
<comment type="similarity">
    <text evidence="1">Belongs to the TatA/E family.</text>
</comment>
<accession>Q8F4W2</accession>
<organism>
    <name type="scientific">Leptospira interrogans serogroup Icterohaemorrhagiae serovar Lai (strain 56601)</name>
    <dbReference type="NCBI Taxonomy" id="189518"/>
    <lineage>
        <taxon>Bacteria</taxon>
        <taxon>Pseudomonadati</taxon>
        <taxon>Spirochaetota</taxon>
        <taxon>Spirochaetia</taxon>
        <taxon>Leptospirales</taxon>
        <taxon>Leptospiraceae</taxon>
        <taxon>Leptospira</taxon>
    </lineage>
</organism>
<keyword id="KW-0997">Cell inner membrane</keyword>
<keyword id="KW-1003">Cell membrane</keyword>
<keyword id="KW-0472">Membrane</keyword>
<keyword id="KW-0653">Protein transport</keyword>
<keyword id="KW-1185">Reference proteome</keyword>
<keyword id="KW-0811">Translocation</keyword>
<keyword id="KW-0812">Transmembrane</keyword>
<keyword id="KW-1133">Transmembrane helix</keyword>
<keyword id="KW-0813">Transport</keyword>
<proteinExistence type="inferred from homology"/>
<evidence type="ECO:0000255" key="1">
    <source>
        <dbReference type="HAMAP-Rule" id="MF_00236"/>
    </source>
</evidence>
<evidence type="ECO:0000256" key="2">
    <source>
        <dbReference type="SAM" id="MobiDB-lite"/>
    </source>
</evidence>
<protein>
    <recommendedName>
        <fullName evidence="1">Sec-independent protein translocase protein TatA</fullName>
    </recommendedName>
</protein>
<reference key="1">
    <citation type="journal article" date="2003" name="Nature">
        <title>Unique physiological and pathogenic features of Leptospira interrogans revealed by whole-genome sequencing.</title>
        <authorList>
            <person name="Ren S.-X."/>
            <person name="Fu G."/>
            <person name="Jiang X.-G."/>
            <person name="Zeng R."/>
            <person name="Miao Y.-G."/>
            <person name="Xu H."/>
            <person name="Zhang Y.-X."/>
            <person name="Xiong H."/>
            <person name="Lu G."/>
            <person name="Lu L.-F."/>
            <person name="Jiang H.-Q."/>
            <person name="Jia J."/>
            <person name="Tu Y.-F."/>
            <person name="Jiang J.-X."/>
            <person name="Gu W.-Y."/>
            <person name="Zhang Y.-Q."/>
            <person name="Cai Z."/>
            <person name="Sheng H.-H."/>
            <person name="Yin H.-F."/>
            <person name="Zhang Y."/>
            <person name="Zhu G.-F."/>
            <person name="Wan M."/>
            <person name="Huang H.-L."/>
            <person name="Qian Z."/>
            <person name="Wang S.-Y."/>
            <person name="Ma W."/>
            <person name="Yao Z.-J."/>
            <person name="Shen Y."/>
            <person name="Qiang B.-Q."/>
            <person name="Xia Q.-C."/>
            <person name="Guo X.-K."/>
            <person name="Danchin A."/>
            <person name="Saint Girons I."/>
            <person name="Somerville R.L."/>
            <person name="Wen Y.-M."/>
            <person name="Shi M.-H."/>
            <person name="Chen Z."/>
            <person name="Xu J.-G."/>
            <person name="Zhao G.-P."/>
        </authorList>
    </citation>
    <scope>NUCLEOTIDE SEQUENCE [LARGE SCALE GENOMIC DNA]</scope>
    <source>
        <strain>56601</strain>
    </source>
</reference>
<dbReference type="EMBL" id="AE010300">
    <property type="protein sequence ID" value="AAN49125.2"/>
    <property type="molecule type" value="Genomic_DNA"/>
</dbReference>
<dbReference type="RefSeq" id="NP_712107.2">
    <property type="nucleotide sequence ID" value="NC_004342.2"/>
</dbReference>
<dbReference type="RefSeq" id="WP_000457916.1">
    <property type="nucleotide sequence ID" value="NC_004342.2"/>
</dbReference>
<dbReference type="SMR" id="Q8F4W2"/>
<dbReference type="FunCoup" id="Q8F4W2">
    <property type="interactions" value="423"/>
</dbReference>
<dbReference type="STRING" id="189518.LA_1926"/>
<dbReference type="PaxDb" id="189518-LA_1926"/>
<dbReference type="EnsemblBacteria" id="AAN49125">
    <property type="protein sequence ID" value="AAN49125"/>
    <property type="gene ID" value="LA_1926"/>
</dbReference>
<dbReference type="KEGG" id="lil:LA_1926"/>
<dbReference type="PATRIC" id="fig|189518.3.peg.1913"/>
<dbReference type="HOGENOM" id="CLU_086034_5_4_12"/>
<dbReference type="InParanoid" id="Q8F4W2"/>
<dbReference type="Proteomes" id="UP000001408">
    <property type="component" value="Chromosome I"/>
</dbReference>
<dbReference type="GO" id="GO:0033281">
    <property type="term" value="C:TAT protein transport complex"/>
    <property type="evidence" value="ECO:0007669"/>
    <property type="project" value="UniProtKB-UniRule"/>
</dbReference>
<dbReference type="GO" id="GO:0008320">
    <property type="term" value="F:protein transmembrane transporter activity"/>
    <property type="evidence" value="ECO:0007669"/>
    <property type="project" value="UniProtKB-UniRule"/>
</dbReference>
<dbReference type="GO" id="GO:0043953">
    <property type="term" value="P:protein transport by the Tat complex"/>
    <property type="evidence" value="ECO:0007669"/>
    <property type="project" value="UniProtKB-UniRule"/>
</dbReference>
<dbReference type="Gene3D" id="1.20.5.3310">
    <property type="match status" value="1"/>
</dbReference>
<dbReference type="HAMAP" id="MF_00236">
    <property type="entry name" value="TatA_E"/>
    <property type="match status" value="1"/>
</dbReference>
<dbReference type="InterPro" id="IPR003369">
    <property type="entry name" value="TatA/B/E"/>
</dbReference>
<dbReference type="InterPro" id="IPR006312">
    <property type="entry name" value="TatA/E"/>
</dbReference>
<dbReference type="NCBIfam" id="TIGR01411">
    <property type="entry name" value="tatAE"/>
    <property type="match status" value="1"/>
</dbReference>
<dbReference type="PANTHER" id="PTHR42982">
    <property type="entry name" value="SEC-INDEPENDENT PROTEIN TRANSLOCASE PROTEIN TATA"/>
    <property type="match status" value="1"/>
</dbReference>
<dbReference type="PANTHER" id="PTHR42982:SF1">
    <property type="entry name" value="SEC-INDEPENDENT PROTEIN TRANSLOCASE PROTEIN TATA"/>
    <property type="match status" value="1"/>
</dbReference>
<dbReference type="Pfam" id="PF02416">
    <property type="entry name" value="TatA_B_E"/>
    <property type="match status" value="1"/>
</dbReference>
<dbReference type="PRINTS" id="PR01506">
    <property type="entry name" value="TATBPROTEIN"/>
</dbReference>